<reference key="1">
    <citation type="journal article" date="2002" name="Proc. Natl. Acad. Sci. U.S.A.">
        <title>Extensive mosaic structure revealed by the complete genome sequence of uropathogenic Escherichia coli.</title>
        <authorList>
            <person name="Welch R.A."/>
            <person name="Burland V."/>
            <person name="Plunkett G. III"/>
            <person name="Redford P."/>
            <person name="Roesch P."/>
            <person name="Rasko D."/>
            <person name="Buckles E.L."/>
            <person name="Liou S.-R."/>
            <person name="Boutin A."/>
            <person name="Hackett J."/>
            <person name="Stroud D."/>
            <person name="Mayhew G.F."/>
            <person name="Rose D.J."/>
            <person name="Zhou S."/>
            <person name="Schwartz D.C."/>
            <person name="Perna N.T."/>
            <person name="Mobley H.L.T."/>
            <person name="Donnenberg M.S."/>
            <person name="Blattner F.R."/>
        </authorList>
    </citation>
    <scope>NUCLEOTIDE SEQUENCE [LARGE SCALE GENOMIC DNA]</scope>
    <source>
        <strain>CFT073 / ATCC 700928 / UPEC</strain>
    </source>
</reference>
<organism>
    <name type="scientific">Escherichia coli O6:H1 (strain CFT073 / ATCC 700928 / UPEC)</name>
    <dbReference type="NCBI Taxonomy" id="199310"/>
    <lineage>
        <taxon>Bacteria</taxon>
        <taxon>Pseudomonadati</taxon>
        <taxon>Pseudomonadota</taxon>
        <taxon>Gammaproteobacteria</taxon>
        <taxon>Enterobacterales</taxon>
        <taxon>Enterobacteriaceae</taxon>
        <taxon>Escherichia</taxon>
    </lineage>
</organism>
<keyword id="KW-0067">ATP-binding</keyword>
<keyword id="KW-0997">Cell inner membrane</keyword>
<keyword id="KW-1003">Cell membrane</keyword>
<keyword id="KW-0406">Ion transport</keyword>
<keyword id="KW-0460">Magnesium</keyword>
<keyword id="KW-0472">Membrane</keyword>
<keyword id="KW-0479">Metal-binding</keyword>
<keyword id="KW-0547">Nucleotide-binding</keyword>
<keyword id="KW-0597">Phosphoprotein</keyword>
<keyword id="KW-0630">Potassium</keyword>
<keyword id="KW-0633">Potassium transport</keyword>
<keyword id="KW-1185">Reference proteome</keyword>
<keyword id="KW-1278">Translocase</keyword>
<keyword id="KW-0812">Transmembrane</keyword>
<keyword id="KW-1133">Transmembrane helix</keyword>
<keyword id="KW-0813">Transport</keyword>
<sequence>MSRKQLALFEPTLVVQALKEAVKKLNPQAQWRNPVMFIVWIGSLLTTCISIAMASGVMPGNALFSAAISGWLWVTVLFANFAEALAEGRSKAQANSLKGVKKTAFARKLREPKYGAAADKVPADQLRKGDIVLVEAGDIIPCDGEVIEGGASVDESAITGESAPVIRESGGDFASVTGGTRILSDWLVIECSVNPGETFLDRMIAMVEGAQRRKTPNEIALTILLIALTIVFLLATATLWPFSAWGGNAVSVTVLVALLVCLIPTTIGGLLSAIGVAGMSRMLGANVIATSGRAVEAAGDVDVLLLDKTGTITLGNRQASEFIPAQGVEEKALADAAQLASLADETPEGRSIVILAKQRFNLRERDVQSLHATFVPFTAQSRMSGINIDNRMIRKGSVDAIRRHVEANGGHFPADVDQKVDQVARQGATPLVVVEGSRVLGVIALKDIVKGGIKERFAQLRKMGIKTVMITGDNRLTAAAIAAEAGVDDFLAEATPEAKLALIRQYQAEGRLVAMTGDGTNDAPALAQADVAVAMNSGTQAAKEAGNMVDLDSNPTKLIEVVHIGKQMLMTRGSLTTFSIANDVAKYFAIIPAAFAATYPQLNALNIMRLHSPDSAILSAVIFNALIIVFLIPLALKGVSYKPLTASAMLRRNLWIYGLGGLLVPFIGIKVIDLLLTVCGLV</sequence>
<protein>
    <recommendedName>
        <fullName evidence="1">Potassium-transporting ATPase ATP-binding subunit</fullName>
        <ecNumber evidence="1">7.2.2.6</ecNumber>
    </recommendedName>
    <alternativeName>
        <fullName evidence="1">ATP phosphohydrolase [potassium-transporting] B chain</fullName>
    </alternativeName>
    <alternativeName>
        <fullName evidence="1">Potassium-binding and translocating subunit B</fullName>
    </alternativeName>
    <alternativeName>
        <fullName evidence="1">Potassium-translocating ATPase B chain</fullName>
    </alternativeName>
</protein>
<evidence type="ECO:0000255" key="1">
    <source>
        <dbReference type="HAMAP-Rule" id="MF_00285"/>
    </source>
</evidence>
<proteinExistence type="inferred from homology"/>
<comment type="function">
    <text evidence="1">Part of the high-affinity ATP-driven potassium transport (or Kdp) system, which catalyzes the hydrolysis of ATP coupled with the electrogenic transport of potassium into the cytoplasm. This subunit is responsible for energy coupling to the transport system and for the release of the potassium ions to the cytoplasm.</text>
</comment>
<comment type="catalytic activity">
    <reaction evidence="1">
        <text>K(+)(out) + ATP + H2O = K(+)(in) + ADP + phosphate + H(+)</text>
        <dbReference type="Rhea" id="RHEA:16777"/>
        <dbReference type="ChEBI" id="CHEBI:15377"/>
        <dbReference type="ChEBI" id="CHEBI:15378"/>
        <dbReference type="ChEBI" id="CHEBI:29103"/>
        <dbReference type="ChEBI" id="CHEBI:30616"/>
        <dbReference type="ChEBI" id="CHEBI:43474"/>
        <dbReference type="ChEBI" id="CHEBI:456216"/>
        <dbReference type="EC" id="7.2.2.6"/>
    </reaction>
    <physiologicalReaction direction="left-to-right" evidence="1">
        <dbReference type="Rhea" id="RHEA:16778"/>
    </physiologicalReaction>
</comment>
<comment type="subunit">
    <text evidence="1">The system is composed of three essential subunits: KdpA, KdpB and KdpC.</text>
</comment>
<comment type="subcellular location">
    <subcellularLocation>
        <location evidence="1">Cell inner membrane</location>
        <topology evidence="1">Multi-pass membrane protein</topology>
    </subcellularLocation>
</comment>
<comment type="similarity">
    <text evidence="1">Belongs to the cation transport ATPase (P-type) (TC 3.A.3) family. Type IA subfamily.</text>
</comment>
<dbReference type="EC" id="7.2.2.6" evidence="1"/>
<dbReference type="EMBL" id="AE014075">
    <property type="protein sequence ID" value="AAN79255.1"/>
    <property type="molecule type" value="Genomic_DNA"/>
</dbReference>
<dbReference type="RefSeq" id="WP_000087998.1">
    <property type="nucleotide sequence ID" value="NZ_CP051263.1"/>
</dbReference>
<dbReference type="SMR" id="Q8FJV4"/>
<dbReference type="STRING" id="199310.c0782"/>
<dbReference type="KEGG" id="ecc:c0782"/>
<dbReference type="eggNOG" id="COG2216">
    <property type="taxonomic scope" value="Bacteria"/>
</dbReference>
<dbReference type="HOGENOM" id="CLU_025728_2_0_6"/>
<dbReference type="BioCyc" id="ECOL199310:C0782-MONOMER"/>
<dbReference type="Proteomes" id="UP000001410">
    <property type="component" value="Chromosome"/>
</dbReference>
<dbReference type="GO" id="GO:0005886">
    <property type="term" value="C:plasma membrane"/>
    <property type="evidence" value="ECO:0007669"/>
    <property type="project" value="UniProtKB-SubCell"/>
</dbReference>
<dbReference type="GO" id="GO:0005524">
    <property type="term" value="F:ATP binding"/>
    <property type="evidence" value="ECO:0007669"/>
    <property type="project" value="UniProtKB-UniRule"/>
</dbReference>
<dbReference type="GO" id="GO:0016887">
    <property type="term" value="F:ATP hydrolysis activity"/>
    <property type="evidence" value="ECO:0007669"/>
    <property type="project" value="InterPro"/>
</dbReference>
<dbReference type="GO" id="GO:0000287">
    <property type="term" value="F:magnesium ion binding"/>
    <property type="evidence" value="ECO:0007669"/>
    <property type="project" value="UniProtKB-UniRule"/>
</dbReference>
<dbReference type="GO" id="GO:0008556">
    <property type="term" value="F:P-type potassium transmembrane transporter activity"/>
    <property type="evidence" value="ECO:0007669"/>
    <property type="project" value="UniProtKB-UniRule"/>
</dbReference>
<dbReference type="CDD" id="cd02078">
    <property type="entry name" value="P-type_ATPase_K"/>
    <property type="match status" value="1"/>
</dbReference>
<dbReference type="FunFam" id="2.70.150.10:FF:000010">
    <property type="entry name" value="Potassium-transporting ATPase ATP-binding subunit"/>
    <property type="match status" value="1"/>
</dbReference>
<dbReference type="FunFam" id="3.40.1110.10:FF:000007">
    <property type="entry name" value="Potassium-transporting ATPase ATP-binding subunit"/>
    <property type="match status" value="1"/>
</dbReference>
<dbReference type="Gene3D" id="3.40.1110.10">
    <property type="entry name" value="Calcium-transporting ATPase, cytoplasmic domain N"/>
    <property type="match status" value="1"/>
</dbReference>
<dbReference type="Gene3D" id="2.70.150.10">
    <property type="entry name" value="Calcium-transporting ATPase, cytoplasmic transduction domain A"/>
    <property type="match status" value="1"/>
</dbReference>
<dbReference type="Gene3D" id="3.40.50.1000">
    <property type="entry name" value="HAD superfamily/HAD-like"/>
    <property type="match status" value="1"/>
</dbReference>
<dbReference type="HAMAP" id="MF_00285">
    <property type="entry name" value="KdpB"/>
    <property type="match status" value="1"/>
</dbReference>
<dbReference type="InterPro" id="IPR023299">
    <property type="entry name" value="ATPase_P-typ_cyto_dom_N"/>
</dbReference>
<dbReference type="InterPro" id="IPR018303">
    <property type="entry name" value="ATPase_P-typ_P_site"/>
</dbReference>
<dbReference type="InterPro" id="IPR023298">
    <property type="entry name" value="ATPase_P-typ_TM_dom_sf"/>
</dbReference>
<dbReference type="InterPro" id="IPR008250">
    <property type="entry name" value="ATPase_P-typ_transduc_dom_A_sf"/>
</dbReference>
<dbReference type="InterPro" id="IPR036412">
    <property type="entry name" value="HAD-like_sf"/>
</dbReference>
<dbReference type="InterPro" id="IPR023214">
    <property type="entry name" value="HAD_sf"/>
</dbReference>
<dbReference type="InterPro" id="IPR006391">
    <property type="entry name" value="P-type_ATPase_bsu_IA"/>
</dbReference>
<dbReference type="InterPro" id="IPR001757">
    <property type="entry name" value="P_typ_ATPase"/>
</dbReference>
<dbReference type="InterPro" id="IPR044492">
    <property type="entry name" value="P_typ_ATPase_HD_dom"/>
</dbReference>
<dbReference type="NCBIfam" id="TIGR01494">
    <property type="entry name" value="ATPase_P-type"/>
    <property type="match status" value="2"/>
</dbReference>
<dbReference type="NCBIfam" id="TIGR01497">
    <property type="entry name" value="kdpB"/>
    <property type="match status" value="1"/>
</dbReference>
<dbReference type="PANTHER" id="PTHR43743">
    <property type="entry name" value="POTASSIUM-TRANSPORTING ATPASE ATP-BINDING SUBUNIT"/>
    <property type="match status" value="1"/>
</dbReference>
<dbReference type="PANTHER" id="PTHR43743:SF1">
    <property type="entry name" value="POTASSIUM-TRANSPORTING ATPASE ATP-BINDING SUBUNIT"/>
    <property type="match status" value="1"/>
</dbReference>
<dbReference type="Pfam" id="PF00122">
    <property type="entry name" value="E1-E2_ATPase"/>
    <property type="match status" value="1"/>
</dbReference>
<dbReference type="Pfam" id="PF00702">
    <property type="entry name" value="Hydrolase"/>
    <property type="match status" value="1"/>
</dbReference>
<dbReference type="PRINTS" id="PR00119">
    <property type="entry name" value="CATATPASE"/>
</dbReference>
<dbReference type="SFLD" id="SFLDG00002">
    <property type="entry name" value="C1.7:_P-type_atpase_like"/>
    <property type="match status" value="1"/>
</dbReference>
<dbReference type="SFLD" id="SFLDF00027">
    <property type="entry name" value="p-type_atpase"/>
    <property type="match status" value="1"/>
</dbReference>
<dbReference type="SUPFAM" id="SSF81653">
    <property type="entry name" value="Calcium ATPase, transduction domain A"/>
    <property type="match status" value="1"/>
</dbReference>
<dbReference type="SUPFAM" id="SSF81665">
    <property type="entry name" value="Calcium ATPase, transmembrane domain M"/>
    <property type="match status" value="1"/>
</dbReference>
<dbReference type="SUPFAM" id="SSF56784">
    <property type="entry name" value="HAD-like"/>
    <property type="match status" value="1"/>
</dbReference>
<dbReference type="SUPFAM" id="SSF81660">
    <property type="entry name" value="Metal cation-transporting ATPase, ATP-binding domain N"/>
    <property type="match status" value="1"/>
</dbReference>
<dbReference type="PROSITE" id="PS00154">
    <property type="entry name" value="ATPASE_E1_E2"/>
    <property type="match status" value="1"/>
</dbReference>
<accession>Q8FJV4</accession>
<gene>
    <name evidence="1" type="primary">kdpB</name>
    <name type="ordered locus">c0782</name>
</gene>
<name>KDPB_ECOL6</name>
<feature type="chain" id="PRO_0000046117" description="Potassium-transporting ATPase ATP-binding subunit">
    <location>
        <begin position="1"/>
        <end position="682"/>
    </location>
</feature>
<feature type="transmembrane region" description="Helical" evidence="1">
    <location>
        <begin position="34"/>
        <end position="54"/>
    </location>
</feature>
<feature type="transmembrane region" description="Helical" evidence="1">
    <location>
        <begin position="62"/>
        <end position="82"/>
    </location>
</feature>
<feature type="transmembrane region" description="Helical" evidence="1">
    <location>
        <begin position="219"/>
        <end position="239"/>
    </location>
</feature>
<feature type="transmembrane region" description="Helical" evidence="1">
    <location>
        <begin position="254"/>
        <end position="274"/>
    </location>
</feature>
<feature type="transmembrane region" description="Helical" evidence="1">
    <location>
        <begin position="588"/>
        <end position="608"/>
    </location>
</feature>
<feature type="transmembrane region" description="Helical" evidence="1">
    <location>
        <begin position="616"/>
        <end position="636"/>
    </location>
</feature>
<feature type="transmembrane region" description="Helical" evidence="1">
    <location>
        <begin position="656"/>
        <end position="676"/>
    </location>
</feature>
<feature type="active site" description="4-aspartylphosphate intermediate" evidence="1">
    <location>
        <position position="307"/>
    </location>
</feature>
<feature type="binding site" evidence="1">
    <location>
        <position position="344"/>
    </location>
    <ligand>
        <name>ATP</name>
        <dbReference type="ChEBI" id="CHEBI:30616"/>
    </ligand>
</feature>
<feature type="binding site" evidence="1">
    <location>
        <position position="348"/>
    </location>
    <ligand>
        <name>ATP</name>
        <dbReference type="ChEBI" id="CHEBI:30616"/>
    </ligand>
</feature>
<feature type="binding site" evidence="1">
    <location>
        <begin position="377"/>
        <end position="384"/>
    </location>
    <ligand>
        <name>ATP</name>
        <dbReference type="ChEBI" id="CHEBI:30616"/>
    </ligand>
</feature>
<feature type="binding site" evidence="1">
    <location>
        <position position="395"/>
    </location>
    <ligand>
        <name>ATP</name>
        <dbReference type="ChEBI" id="CHEBI:30616"/>
    </ligand>
</feature>
<feature type="binding site" evidence="1">
    <location>
        <position position="518"/>
    </location>
    <ligand>
        <name>Mg(2+)</name>
        <dbReference type="ChEBI" id="CHEBI:18420"/>
    </ligand>
</feature>
<feature type="binding site" evidence="1">
    <location>
        <position position="522"/>
    </location>
    <ligand>
        <name>Mg(2+)</name>
        <dbReference type="ChEBI" id="CHEBI:18420"/>
    </ligand>
</feature>